<feature type="chain" id="PRO_0000334576" description="Callose synthase 4">
    <location>
        <begin position="1"/>
        <end position="1871"/>
    </location>
</feature>
<feature type="topological domain" description="Cytoplasmic" evidence="2">
    <location>
        <begin position="1"/>
        <end position="491"/>
    </location>
</feature>
<feature type="transmembrane region" description="Helical" evidence="2">
    <location>
        <begin position="492"/>
        <end position="512"/>
    </location>
</feature>
<feature type="topological domain" description="Extracellular" evidence="2">
    <location>
        <begin position="513"/>
        <end position="521"/>
    </location>
</feature>
<feature type="transmembrane region" description="Helical" evidence="2">
    <location>
        <begin position="522"/>
        <end position="542"/>
    </location>
</feature>
<feature type="topological domain" description="Cytoplasmic" evidence="2">
    <location>
        <begin position="543"/>
        <end position="558"/>
    </location>
</feature>
<feature type="transmembrane region" description="Helical" evidence="2">
    <location>
        <begin position="559"/>
        <end position="579"/>
    </location>
</feature>
<feature type="topological domain" description="Extracellular" evidence="2">
    <location>
        <begin position="580"/>
        <end position="583"/>
    </location>
</feature>
<feature type="transmembrane region" description="Helical" evidence="2">
    <location>
        <begin position="584"/>
        <end position="604"/>
    </location>
</feature>
<feature type="topological domain" description="Cytoplasmic" evidence="2">
    <location>
        <begin position="605"/>
        <end position="640"/>
    </location>
</feature>
<feature type="transmembrane region" description="Helical" evidence="2">
    <location>
        <begin position="641"/>
        <end position="661"/>
    </location>
</feature>
<feature type="topological domain" description="Extracellular" evidence="2">
    <location>
        <begin position="662"/>
        <end position="701"/>
    </location>
</feature>
<feature type="transmembrane region" description="Helical" evidence="2">
    <location>
        <begin position="702"/>
        <end position="724"/>
    </location>
</feature>
<feature type="topological domain" description="Cytoplasmic" evidence="2">
    <location>
        <begin position="725"/>
        <end position="1441"/>
    </location>
</feature>
<feature type="transmembrane region" description="Helical" evidence="2">
    <location>
        <begin position="1442"/>
        <end position="1462"/>
    </location>
</feature>
<feature type="topological domain" description="Extracellular" evidence="2">
    <location>
        <begin position="1463"/>
        <end position="1485"/>
    </location>
</feature>
<feature type="transmembrane region" description="Helical" evidence="2">
    <location>
        <begin position="1486"/>
        <end position="1506"/>
    </location>
</feature>
<feature type="topological domain" description="Cytoplasmic" evidence="2">
    <location>
        <begin position="1507"/>
        <end position="1516"/>
    </location>
</feature>
<feature type="transmembrane region" description="Helical" evidence="2">
    <location>
        <begin position="1517"/>
        <end position="1537"/>
    </location>
</feature>
<feature type="topological domain" description="Extracellular" evidence="2">
    <location>
        <begin position="1538"/>
        <end position="1580"/>
    </location>
</feature>
<feature type="transmembrane region" description="Helical" evidence="2">
    <location>
        <begin position="1581"/>
        <end position="1601"/>
    </location>
</feature>
<feature type="transmembrane region" description="Helical" evidence="2">
    <location>
        <begin position="1602"/>
        <end position="1622"/>
    </location>
</feature>
<feature type="topological domain" description="Extracellular" evidence="2">
    <location>
        <begin position="1623"/>
        <end position="1675"/>
    </location>
</feature>
<feature type="transmembrane region" description="Helical" evidence="2">
    <location>
        <begin position="1676"/>
        <end position="1696"/>
    </location>
</feature>
<feature type="topological domain" description="Cytoplasmic" evidence="2">
    <location>
        <begin position="1697"/>
        <end position="1708"/>
    </location>
</feature>
<feature type="transmembrane region" description="Helical" evidence="2">
    <location>
        <begin position="1709"/>
        <end position="1729"/>
    </location>
</feature>
<feature type="topological domain" description="Extracellular" evidence="2">
    <location>
        <begin position="1730"/>
        <end position="1741"/>
    </location>
</feature>
<feature type="transmembrane region" description="Helical" evidence="2">
    <location>
        <begin position="1742"/>
        <end position="1762"/>
    </location>
</feature>
<feature type="topological domain" description="Cytoplasmic" evidence="2">
    <location>
        <begin position="1763"/>
        <end position="1772"/>
    </location>
</feature>
<feature type="transmembrane region" description="Helical" evidence="2">
    <location>
        <begin position="1773"/>
        <end position="1793"/>
    </location>
</feature>
<feature type="topological domain" description="Extracellular" evidence="2">
    <location>
        <begin position="1794"/>
        <end position="1815"/>
    </location>
</feature>
<feature type="transmembrane region" description="Helical" evidence="2">
    <location>
        <begin position="1816"/>
        <end position="1836"/>
    </location>
</feature>
<feature type="topological domain" description="Cytoplasmic" evidence="2">
    <location>
        <begin position="1837"/>
        <end position="1871"/>
    </location>
</feature>
<organism>
    <name type="scientific">Arabidopsis thaliana</name>
    <name type="common">Mouse-ear cress</name>
    <dbReference type="NCBI Taxonomy" id="3702"/>
    <lineage>
        <taxon>Eukaryota</taxon>
        <taxon>Viridiplantae</taxon>
        <taxon>Streptophyta</taxon>
        <taxon>Embryophyta</taxon>
        <taxon>Tracheophyta</taxon>
        <taxon>Spermatophyta</taxon>
        <taxon>Magnoliopsida</taxon>
        <taxon>eudicotyledons</taxon>
        <taxon>Gunneridae</taxon>
        <taxon>Pentapetalae</taxon>
        <taxon>rosids</taxon>
        <taxon>malvids</taxon>
        <taxon>Brassicales</taxon>
        <taxon>Brassicaceae</taxon>
        <taxon>Camelineae</taxon>
        <taxon>Arabidopsis</taxon>
    </lineage>
</organism>
<reference key="1">
    <citation type="submission" date="1999-04" db="EMBL/GenBank/DDBJ databases">
        <title>Structural analysis of Arabidopsis thaliana chromosome 5. XI.</title>
        <authorList>
            <person name="Kaneko T."/>
            <person name="Katoh T."/>
            <person name="Asamizu E."/>
            <person name="Sato S."/>
            <person name="Nakamura Y."/>
            <person name="Kotani H."/>
            <person name="Tabata S."/>
        </authorList>
    </citation>
    <scope>NUCLEOTIDE SEQUENCE [LARGE SCALE GENOMIC DNA]</scope>
    <source>
        <strain>cv. Columbia</strain>
    </source>
</reference>
<reference key="2">
    <citation type="journal article" date="2017" name="Plant J.">
        <title>Araport11: a complete reannotation of the Arabidopsis thaliana reference genome.</title>
        <authorList>
            <person name="Cheng C.Y."/>
            <person name="Krishnakumar V."/>
            <person name="Chan A.P."/>
            <person name="Thibaud-Nissen F."/>
            <person name="Schobel S."/>
            <person name="Town C.D."/>
        </authorList>
    </citation>
    <scope>GENOME REANNOTATION</scope>
    <source>
        <strain>cv. Columbia</strain>
    </source>
</reference>
<reference key="3">
    <citation type="journal article" date="2001" name="Plant Cell">
        <title>A cell plate-specific callose synthase and its interaction with phragmoplastin.</title>
        <authorList>
            <person name="Hong Z."/>
            <person name="Delauney A.J."/>
            <person name="Verma D.P.S."/>
        </authorList>
    </citation>
    <scope>GENE FAMILY</scope>
    <scope>NOMENCLATURE</scope>
</reference>
<reference key="4">
    <citation type="journal article" date="2005" name="Plant Mol. Biol.">
        <title>Two callose synthases, GSL1 and GSL5, play an essential and redundant role in plant and pollen development and in fertility.</title>
        <authorList>
            <person name="Enns L.C."/>
            <person name="Kanaoka M.M."/>
            <person name="Torii K.U."/>
            <person name="Comai L."/>
            <person name="Okada K."/>
            <person name="Cleland R.E."/>
        </authorList>
    </citation>
    <scope>NOMENCLATURE</scope>
</reference>
<accession>Q9LTG5</accession>
<gene>
    <name type="primary">CALS4</name>
    <name type="synonym">GSL9</name>
    <name type="ordered locus">At5g36870</name>
    <name type="ORF">F5H8.14</name>
</gene>
<protein>
    <recommendedName>
        <fullName>Callose synthase 4</fullName>
        <ecNumber>2.4.1.34</ecNumber>
    </recommendedName>
    <alternativeName>
        <fullName>1,3-beta-glucan synthase</fullName>
    </alternativeName>
    <alternativeName>
        <fullName>Protein GLUCAN SYNTHASE-LIKE 9</fullName>
    </alternativeName>
</protein>
<proteinExistence type="inferred from homology"/>
<name>CALS4_ARATH</name>
<dbReference type="EC" id="2.4.1.34"/>
<dbReference type="EMBL" id="AB025605">
    <property type="protein sequence ID" value="BAA98065.1"/>
    <property type="status" value="ALT_SEQ"/>
    <property type="molecule type" value="Genomic_DNA"/>
</dbReference>
<dbReference type="EMBL" id="CP002688">
    <property type="protein sequence ID" value="AED94119.1"/>
    <property type="molecule type" value="Genomic_DNA"/>
</dbReference>
<dbReference type="RefSeq" id="NP_198503.3">
    <property type="nucleotide sequence ID" value="NM_123045.4"/>
</dbReference>
<dbReference type="BioGRID" id="18905">
    <property type="interactions" value="1"/>
</dbReference>
<dbReference type="FunCoup" id="Q9LTG5">
    <property type="interactions" value="215"/>
</dbReference>
<dbReference type="STRING" id="3702.Q9LTG5"/>
<dbReference type="CAZy" id="GT48">
    <property type="family name" value="Glycosyltransferase Family 48"/>
</dbReference>
<dbReference type="PaxDb" id="3702-AT5G36870.1"/>
<dbReference type="EnsemblPlants" id="AT5G36870.1">
    <property type="protein sequence ID" value="AT5G36870.1"/>
    <property type="gene ID" value="AT5G36870"/>
</dbReference>
<dbReference type="GeneID" id="833654"/>
<dbReference type="Gramene" id="AT5G36870.1">
    <property type="protein sequence ID" value="AT5G36870.1"/>
    <property type="gene ID" value="AT5G36870"/>
</dbReference>
<dbReference type="KEGG" id="ath:AT5G36870"/>
<dbReference type="Araport" id="AT5G36870"/>
<dbReference type="TAIR" id="AT5G36870">
    <property type="gene designation" value="GSL09"/>
</dbReference>
<dbReference type="eggNOG" id="KOG0916">
    <property type="taxonomic scope" value="Eukaryota"/>
</dbReference>
<dbReference type="HOGENOM" id="CLU_000742_0_0_1"/>
<dbReference type="InParanoid" id="Q9LTG5"/>
<dbReference type="PhylomeDB" id="Q9LTG5"/>
<dbReference type="BioCyc" id="ARA:AT5G36870-MONOMER"/>
<dbReference type="PRO" id="PR:Q9LTG5"/>
<dbReference type="Proteomes" id="UP000006548">
    <property type="component" value="Chromosome 5"/>
</dbReference>
<dbReference type="ExpressionAtlas" id="Q9LTG5">
    <property type="expression patterns" value="baseline and differential"/>
</dbReference>
<dbReference type="GO" id="GO:0000148">
    <property type="term" value="C:1,3-beta-D-glucan synthase complex"/>
    <property type="evidence" value="ECO:0007669"/>
    <property type="project" value="InterPro"/>
</dbReference>
<dbReference type="GO" id="GO:0005886">
    <property type="term" value="C:plasma membrane"/>
    <property type="evidence" value="ECO:0007669"/>
    <property type="project" value="UniProtKB-SubCell"/>
</dbReference>
<dbReference type="GO" id="GO:0003843">
    <property type="term" value="F:1,3-beta-D-glucan synthase activity"/>
    <property type="evidence" value="ECO:0007669"/>
    <property type="project" value="UniProtKB-EC"/>
</dbReference>
<dbReference type="GO" id="GO:0006075">
    <property type="term" value="P:(1-&gt;3)-beta-D-glucan biosynthetic process"/>
    <property type="evidence" value="ECO:0007669"/>
    <property type="project" value="InterPro"/>
</dbReference>
<dbReference type="GO" id="GO:0071555">
    <property type="term" value="P:cell wall organization"/>
    <property type="evidence" value="ECO:0007669"/>
    <property type="project" value="UniProtKB-KW"/>
</dbReference>
<dbReference type="GO" id="GO:0008360">
    <property type="term" value="P:regulation of cell shape"/>
    <property type="evidence" value="ECO:0007669"/>
    <property type="project" value="UniProtKB-KW"/>
</dbReference>
<dbReference type="FunFam" id="1.25.40.270:FF:000002">
    <property type="entry name" value="callose synthase 3"/>
    <property type="match status" value="1"/>
</dbReference>
<dbReference type="Gene3D" id="1.25.40.270">
    <property type="entry name" value="Vacuolar protein sorting-associated protein vta1"/>
    <property type="match status" value="1"/>
</dbReference>
<dbReference type="InterPro" id="IPR026899">
    <property type="entry name" value="FKS1-like_dom1"/>
</dbReference>
<dbReference type="InterPro" id="IPR003440">
    <property type="entry name" value="Glyco_trans_48_dom"/>
</dbReference>
<dbReference type="InterPro" id="IPR023175">
    <property type="entry name" value="Vta1/CALS_N_sf"/>
</dbReference>
<dbReference type="PANTHER" id="PTHR12741:SF70">
    <property type="entry name" value="CALLOSE SYNTHASE 2-RELATED"/>
    <property type="match status" value="1"/>
</dbReference>
<dbReference type="PANTHER" id="PTHR12741">
    <property type="entry name" value="LYST-INTERACTING PROTEIN LIP5 DOPAMINE RESPONSIVE PROTEIN DRG-1"/>
    <property type="match status" value="1"/>
</dbReference>
<dbReference type="Pfam" id="PF14288">
    <property type="entry name" value="FKS1_dom1"/>
    <property type="match status" value="1"/>
</dbReference>
<dbReference type="Pfam" id="PF02364">
    <property type="entry name" value="Glucan_synthase"/>
    <property type="match status" value="2"/>
</dbReference>
<dbReference type="SMART" id="SM01205">
    <property type="entry name" value="FKS1_dom1"/>
    <property type="match status" value="1"/>
</dbReference>
<keyword id="KW-1003">Cell membrane</keyword>
<keyword id="KW-0133">Cell shape</keyword>
<keyword id="KW-0961">Cell wall biogenesis/degradation</keyword>
<keyword id="KW-0328">Glycosyltransferase</keyword>
<keyword id="KW-0472">Membrane</keyword>
<keyword id="KW-1185">Reference proteome</keyword>
<keyword id="KW-0808">Transferase</keyword>
<keyword id="KW-0812">Transmembrane</keyword>
<keyword id="KW-1133">Transmembrane helix</keyword>
<evidence type="ECO:0000250" key="1"/>
<evidence type="ECO:0000255" key="2"/>
<evidence type="ECO:0000305" key="3"/>
<sequence>MNQPNRGQILQTVFSHFFPVASPDSELVPSSLHEDITPILRVAKDVEDTNPRSLFLQDLDIKSVDDSINILSGHSHALDKANELDPTSSGRDVRQFKNTILQWLEKNNESTLKARQKSSDAHEMQSFYQQYGDEGINDLLNAGAGSSSSQRTKIYQTAVVLYDVLDAVHRKANIKVAAKILESHAEVEAKNKIYVPYNILPLDPDSKNHAMMRDPKIVAVLKAIRYTSDLTWQIGHKINDDEDVLDWLKTMFRFQKDNVSNQREHLILLLANVQMRQTQRQPNLLDDRALDTVMEKLLGNYNKWCNHVGLESSLRFPKDKQQKVVQQRKLLYTGLYLLIWGEAANLRFMPECLCYIYHHMAFELFEMLESKGSKKKYKPKNPTYSGKDEDFLTKVVTPVYKTIAEEAKKSGEGKHSEWRNYDDLNEYFWSKQYLDKLGWPMKANADFFCKTSQQLGLNKSEKKPDLGDGCVGKVNFVEIRTFWHLFRSFDRMWSFYILSLQAMIIIAWNETSESGGAVFHKVLSVFITAAKLNLFQAFLDIALSWKARHSMSTHVRQRYIFKAVAAAVWVLLMPLTYAYSHTSIFIVAILIYLSPNMLPEMLLLIPSIRRTLEKSDFRPVKLIMWWSQPELYIGRGMHESAWSIYKYMMFWIVLLTSKLAFSYYVEQIKPLMGPTKEIMSVPMPGYWLPEFFPHVKNNRGVVITLWSPVILVYFMDTQIWYAIVSTLVGGLYGAFRHIGEIQTLGMLRSRFQSLPGAFNACLIPNENTKEKGIKLAFSRKCHKIPNTNGKEAKQFSQMWNTIINSFREEDLISNRELELLLMSCWAYPDLDFIRWPIFLLASKIPIAVDIAKKRNGKHRELKNILAEDNCMSCAVRECYASIKKLLNTLVTGNSDLMLITTVFTIIDTHIEKDTLLTELNLSVLPDLHGHFVKLTEYVLQNKDKDKIQIVNVLLKILEMVTKDILKEEIKRLHLLLTVKESAMDVPSNLEARRRLTFFSNSLFMEMPGAPKIQNMLSFSALTPYYSEDVLFSTFDLEKENDGVSILFYLQKIFPDEWKNFLERVKCGTEEELDAIDYLKEEIRLWASYRGQTLTKTVRGMMYYQKALELQAFFDLANERELMKGYKSAEASSSGSSLWAECQALADIKFTYVVACQQYSIHKRSGDQRAKDILTLMTTYPSLRVAYIDEVEQTHIYSKGTSENFYYSALVKAAPQTYSTDSSDSGHMLDQVIYQIKLPGPPIIGEGKPENQNNAIIFTRGEALQTIDMNQDYYIEEAFKMRNLLQEFLEKNGGVRYPTILGLREHIFTRSVSCLAWFMSNQEHSFVTIGQRVLANPLKVRFHYGHPDVFDRVFHLTRGGVSKASKVINLSEDIFAGFNSTLREGTVSHHEYIQVGKGRDVGLNQISMFEAKIANGSGEQTLSRDLYRLGHQFDFFRMLSCYFTTVGFYFCSMLTVLTVYVFLYGRLYLVLSGVEKELGNKPMMMEIILASQSFVQIVFLMAMPMIMEIGLERGFYDALFDFVLMQLQLASVFFTFQLGTKFHYYCKTLLHGGAEYRGTGRGFVVFHAKFAENYRFYSRSHFVKATELGILLLVYHIFGPTYIGLFTISIWFMVGTWLFAPFLFNPSGFEWHEIVEDWADWKKWIEYDNGGIGVPPEKSWESWWEKDIEHLQHSGKWGIVVEIFFALRFFIFQYGLVYQLSAFKNKYSSLWVFGASWLLILILLLTVTVLDYARRRLGTEFQLLFRIIKVSLFLAFMAIFITLMTCRLILPQDVFLCMLALIPTGWGLLLIAQSCKPLIQQPGIWSWVMTLAWVYDLVMGSLLFIPIAFMAWFPFISEFQTRMLFNQAFSRGLHISRILSGQRKHRSSKNKD</sequence>
<comment type="function">
    <text evidence="1">Involved in callose synthesis at the forming cell plate during cytokinesis. During plant growth and development, callose is found as a transitory component of the cell plate in dividing cells, is a major component of pollen mother cell walls and pollen tubes, and is found as a structural component of plasmodesmatal canals (By similarity).</text>
</comment>
<comment type="catalytic activity">
    <reaction>
        <text>[(1-&gt;3)-beta-D-glucosyl](n) + UDP-alpha-D-glucose = [(1-&gt;3)-beta-D-glucosyl](n+1) + UDP + H(+)</text>
        <dbReference type="Rhea" id="RHEA:21476"/>
        <dbReference type="Rhea" id="RHEA-COMP:11146"/>
        <dbReference type="Rhea" id="RHEA-COMP:14303"/>
        <dbReference type="ChEBI" id="CHEBI:15378"/>
        <dbReference type="ChEBI" id="CHEBI:37671"/>
        <dbReference type="ChEBI" id="CHEBI:58223"/>
        <dbReference type="ChEBI" id="CHEBI:58885"/>
        <dbReference type="EC" id="2.4.1.34"/>
    </reaction>
</comment>
<comment type="subcellular location">
    <subcellularLocation>
        <location evidence="3">Cell membrane</location>
        <topology evidence="3">Multi-pass membrane protein</topology>
    </subcellularLocation>
</comment>
<comment type="similarity">
    <text evidence="3">Belongs to the glycosyltransferase 48 family.</text>
</comment>
<comment type="sequence caution" evidence="3">
    <conflict type="erroneous gene model prediction">
        <sequence resource="EMBL-CDS" id="BAA98065"/>
    </conflict>
</comment>